<name>ALN_AQUCT</name>
<accession>P40757</accession>
<protein>
    <recommendedName>
        <fullName>Allantoinase, mitochondrial</fullName>
        <ecNumber>3.5.2.5</ecNumber>
    </recommendedName>
</protein>
<evidence type="ECO:0000250" key="1"/>
<evidence type="ECO:0000255" key="2"/>
<evidence type="ECO:0000305" key="3"/>
<keyword id="KW-0903">Direct protein sequencing</keyword>
<keyword id="KW-0378">Hydrolase</keyword>
<keyword id="KW-0479">Metal-binding</keyword>
<keyword id="KW-0496">Mitochondrion</keyword>
<keyword id="KW-0809">Transit peptide</keyword>
<keyword id="KW-0862">Zinc</keyword>
<reference key="1">
    <citation type="journal article" date="1994" name="J. Biol. Chem.">
        <title>Amphibian allantoinase. Molecular cloning, tissue distribution, and functional expression.</title>
        <authorList>
            <person name="Hayashi S."/>
            <person name="Jain S."/>
            <person name="Chu R."/>
            <person name="Alvares K."/>
            <person name="Xu B."/>
            <person name="Erfurth F."/>
            <person name="Usuda N."/>
            <person name="Rao M.S."/>
            <person name="Reddy S.K."/>
            <person name="Noguchi T."/>
            <person name="Reddy J.K."/>
            <person name="Yeldandi A.Y."/>
        </authorList>
    </citation>
    <scope>NUCLEOTIDE SEQUENCE [MRNA]</scope>
    <scope>PROTEIN SEQUENCE OF 365-381</scope>
    <source>
        <tissue>Liver</tissue>
    </source>
</reference>
<dbReference type="EC" id="3.5.2.5"/>
<dbReference type="EMBL" id="U03471">
    <property type="protein sequence ID" value="AAA19116.1"/>
    <property type="molecule type" value="mRNA"/>
</dbReference>
<dbReference type="PIR" id="A53595">
    <property type="entry name" value="A53595"/>
</dbReference>
<dbReference type="SMR" id="P40757"/>
<dbReference type="UniPathway" id="UPA00395">
    <property type="reaction ID" value="UER00653"/>
</dbReference>
<dbReference type="GO" id="GO:0005739">
    <property type="term" value="C:mitochondrion"/>
    <property type="evidence" value="ECO:0007669"/>
    <property type="project" value="UniProtKB-SubCell"/>
</dbReference>
<dbReference type="GO" id="GO:0004038">
    <property type="term" value="F:allantoinase activity"/>
    <property type="evidence" value="ECO:0007669"/>
    <property type="project" value="UniProtKB-EC"/>
</dbReference>
<dbReference type="GO" id="GO:0050897">
    <property type="term" value="F:cobalt ion binding"/>
    <property type="evidence" value="ECO:0007669"/>
    <property type="project" value="InterPro"/>
</dbReference>
<dbReference type="GO" id="GO:0008270">
    <property type="term" value="F:zinc ion binding"/>
    <property type="evidence" value="ECO:0007669"/>
    <property type="project" value="InterPro"/>
</dbReference>
<dbReference type="GO" id="GO:0000256">
    <property type="term" value="P:allantoin catabolic process"/>
    <property type="evidence" value="ECO:0007669"/>
    <property type="project" value="UniProtKB-UniPathway"/>
</dbReference>
<dbReference type="GO" id="GO:0006145">
    <property type="term" value="P:purine nucleobase catabolic process"/>
    <property type="evidence" value="ECO:0007669"/>
    <property type="project" value="TreeGrafter"/>
</dbReference>
<dbReference type="FunFam" id="3.20.20.140:FF:000032">
    <property type="entry name" value="Allantoinase Dal1"/>
    <property type="match status" value="1"/>
</dbReference>
<dbReference type="Gene3D" id="3.20.20.140">
    <property type="entry name" value="Metal-dependent hydrolases"/>
    <property type="match status" value="1"/>
</dbReference>
<dbReference type="InterPro" id="IPR017593">
    <property type="entry name" value="Allantoinase"/>
</dbReference>
<dbReference type="InterPro" id="IPR006680">
    <property type="entry name" value="Amidohydro-rel"/>
</dbReference>
<dbReference type="InterPro" id="IPR050138">
    <property type="entry name" value="DHOase/Allantoinase_Hydrolase"/>
</dbReference>
<dbReference type="InterPro" id="IPR002195">
    <property type="entry name" value="Dihydroorotase_CS"/>
</dbReference>
<dbReference type="InterPro" id="IPR011059">
    <property type="entry name" value="Metal-dep_hydrolase_composite"/>
</dbReference>
<dbReference type="InterPro" id="IPR032466">
    <property type="entry name" value="Metal_Hydrolase"/>
</dbReference>
<dbReference type="NCBIfam" id="TIGR03178">
    <property type="entry name" value="allantoinase"/>
    <property type="match status" value="1"/>
</dbReference>
<dbReference type="PANTHER" id="PTHR43668">
    <property type="entry name" value="ALLANTOINASE"/>
    <property type="match status" value="1"/>
</dbReference>
<dbReference type="PANTHER" id="PTHR43668:SF2">
    <property type="entry name" value="ALLANTOINASE"/>
    <property type="match status" value="1"/>
</dbReference>
<dbReference type="Pfam" id="PF01979">
    <property type="entry name" value="Amidohydro_1"/>
    <property type="match status" value="1"/>
</dbReference>
<dbReference type="SUPFAM" id="SSF51338">
    <property type="entry name" value="Composite domain of metallo-dependent hydrolases"/>
    <property type="match status" value="1"/>
</dbReference>
<dbReference type="SUPFAM" id="SSF51556">
    <property type="entry name" value="Metallo-dependent hydrolases"/>
    <property type="match status" value="1"/>
</dbReference>
<dbReference type="PROSITE" id="PS00482">
    <property type="entry name" value="DIHYDROOROTASE_1"/>
    <property type="match status" value="1"/>
</dbReference>
<organism>
    <name type="scientific">Aquarana catesbeiana</name>
    <name type="common">American bullfrog</name>
    <name type="synonym">Rana catesbeiana</name>
    <dbReference type="NCBI Taxonomy" id="8400"/>
    <lineage>
        <taxon>Eukaryota</taxon>
        <taxon>Metazoa</taxon>
        <taxon>Chordata</taxon>
        <taxon>Craniata</taxon>
        <taxon>Vertebrata</taxon>
        <taxon>Euteleostomi</taxon>
        <taxon>Amphibia</taxon>
        <taxon>Batrachia</taxon>
        <taxon>Anura</taxon>
        <taxon>Neobatrachia</taxon>
        <taxon>Ranoidea</taxon>
        <taxon>Ranidae</taxon>
        <taxon>Aquarana</taxon>
    </lineage>
</organism>
<comment type="catalytic activity">
    <reaction>
        <text>(S)-allantoin + H2O = allantoate + H(+)</text>
        <dbReference type="Rhea" id="RHEA:17029"/>
        <dbReference type="ChEBI" id="CHEBI:15377"/>
        <dbReference type="ChEBI" id="CHEBI:15378"/>
        <dbReference type="ChEBI" id="CHEBI:15678"/>
        <dbReference type="ChEBI" id="CHEBI:17536"/>
        <dbReference type="EC" id="3.5.2.5"/>
    </reaction>
</comment>
<comment type="cofactor">
    <cofactor evidence="1">
        <name>Zn(2+)</name>
        <dbReference type="ChEBI" id="CHEBI:29105"/>
    </cofactor>
    <text evidence="1">Binds 2 Zn(2+) ions per subunit.</text>
</comment>
<comment type="pathway">
    <text>Nitrogen metabolism; (S)-allantoin degradation; allantoate from (S)-allantoin: step 1/1.</text>
</comment>
<comment type="subunit">
    <text evidence="1">Homotetramer.</text>
</comment>
<comment type="subcellular location">
    <subcellularLocation>
        <location>Mitochondrion</location>
    </subcellularLocation>
</comment>
<comment type="tissue specificity">
    <text>Liver and kidney.</text>
</comment>
<comment type="PTM">
    <text evidence="1">Carboxylation allows a single lysine to coordinate two zinc ions.</text>
</comment>
<comment type="similarity">
    <text evidence="3">Belongs to the metallo-dependent hydrolases superfamily. Allantoinase family.</text>
</comment>
<gene>
    <name type="primary">ALN</name>
</gene>
<sequence length="484" mass="53257">MALKSKPGIMNITPGSKISVIRSKRVIQANTISSCDIIISDGKISSVLAWGKHVTSGAKLLDVGDLVVMAGIIDPHVHVNEPGRTDWEGYRTATLAAAAGGITAIVDMPLNSLPPTTSVTNFHTKLQAAKRQCYVDVAFWGGVIPDNQVELIPMLQAGVAGFKCFLINSGVPEFPHVSVTDLHTAMSELQGTNSVLLFHAELEIAKPAPEIGDSTLYQTFLDSRPDDMEIAAVQLVADLCQQYKVRCHIVHLSSAQSLTIIRKAKEAGAPLTVETTHHYLSLSSEHIPPGATYFKCCPPVRGHRNKEALWNALLQGHIDMVVSDHSPCTPDLKLLKEGDYMKAWGGISSLQFGLPLFWTSARTRGFSLTDVSQLLSSNTAKLCGLGIVKEPLKWVMMLIWSSGILTKSFRCKKMIFITRISSPHIWDSFFKEKSWLLLFEGLLFISKGSMLPNQLENLFLYTLWSLVKPVHPVHPIIRKNLPHI</sequence>
<proteinExistence type="evidence at protein level"/>
<feature type="transit peptide" description="Mitochondrion" evidence="2">
    <location>
        <begin position="1"/>
        <end status="unknown"/>
    </location>
</feature>
<feature type="chain" id="PRO_0000007371" description="Allantoinase, mitochondrial">
    <location>
        <begin status="unknown"/>
        <end position="484"/>
    </location>
</feature>
<feature type="binding site" evidence="1">
    <location>
        <position position="76"/>
    </location>
    <ligand>
        <name>Zn(2+)</name>
        <dbReference type="ChEBI" id="CHEBI:29105"/>
        <label>1</label>
    </ligand>
</feature>
<feature type="binding site" evidence="1">
    <location>
        <position position="78"/>
    </location>
    <ligand>
        <name>Zn(2+)</name>
        <dbReference type="ChEBI" id="CHEBI:29105"/>
        <label>1</label>
    </ligand>
</feature>
<feature type="binding site" description="via carbamate group" evidence="1">
    <location>
        <position position="163"/>
    </location>
    <ligand>
        <name>Zn(2+)</name>
        <dbReference type="ChEBI" id="CHEBI:29105"/>
        <label>1</label>
    </ligand>
</feature>
<feature type="binding site" description="via carbamate group" evidence="1">
    <location>
        <position position="163"/>
    </location>
    <ligand>
        <name>Zn(2+)</name>
        <dbReference type="ChEBI" id="CHEBI:29105"/>
        <label>2</label>
    </ligand>
</feature>
<feature type="binding site" evidence="1">
    <location>
        <position position="199"/>
    </location>
    <ligand>
        <name>Zn(2+)</name>
        <dbReference type="ChEBI" id="CHEBI:29105"/>
        <label>2</label>
    </ligand>
</feature>
<feature type="binding site" evidence="1">
    <location>
        <position position="251"/>
    </location>
    <ligand>
        <name>Zn(2+)</name>
        <dbReference type="ChEBI" id="CHEBI:29105"/>
        <label>2</label>
    </ligand>
</feature>
<feature type="binding site" evidence="1">
    <location>
        <position position="324"/>
    </location>
    <ligand>
        <name>Zn(2+)</name>
        <dbReference type="ChEBI" id="CHEBI:29105"/>
        <label>1</label>
    </ligand>
</feature>
<feature type="modified residue" description="N6-carboxylysine" evidence="1">
    <location>
        <position position="163"/>
    </location>
</feature>